<dbReference type="EC" id="2.5.1.61" evidence="1"/>
<dbReference type="EMBL" id="AM920689">
    <property type="protein sequence ID" value="CAP50024.1"/>
    <property type="molecule type" value="Genomic_DNA"/>
</dbReference>
<dbReference type="SMR" id="B0RNI9"/>
<dbReference type="KEGG" id="xca:xcc-b100_0685"/>
<dbReference type="HOGENOM" id="CLU_019704_0_2_6"/>
<dbReference type="UniPathway" id="UPA00251">
    <property type="reaction ID" value="UER00319"/>
</dbReference>
<dbReference type="Proteomes" id="UP000001188">
    <property type="component" value="Chromosome"/>
</dbReference>
<dbReference type="GO" id="GO:0005737">
    <property type="term" value="C:cytoplasm"/>
    <property type="evidence" value="ECO:0007669"/>
    <property type="project" value="TreeGrafter"/>
</dbReference>
<dbReference type="GO" id="GO:0004418">
    <property type="term" value="F:hydroxymethylbilane synthase activity"/>
    <property type="evidence" value="ECO:0007669"/>
    <property type="project" value="UniProtKB-UniRule"/>
</dbReference>
<dbReference type="GO" id="GO:0006782">
    <property type="term" value="P:protoporphyrinogen IX biosynthetic process"/>
    <property type="evidence" value="ECO:0007669"/>
    <property type="project" value="UniProtKB-UniRule"/>
</dbReference>
<dbReference type="CDD" id="cd13646">
    <property type="entry name" value="PBP2_EcHMBS_like"/>
    <property type="match status" value="1"/>
</dbReference>
<dbReference type="FunFam" id="3.40.190.10:FF:000004">
    <property type="entry name" value="Porphobilinogen deaminase"/>
    <property type="match status" value="1"/>
</dbReference>
<dbReference type="FunFam" id="3.40.190.10:FF:000005">
    <property type="entry name" value="Porphobilinogen deaminase"/>
    <property type="match status" value="1"/>
</dbReference>
<dbReference type="Gene3D" id="3.40.190.10">
    <property type="entry name" value="Periplasmic binding protein-like II"/>
    <property type="match status" value="2"/>
</dbReference>
<dbReference type="Gene3D" id="3.30.160.40">
    <property type="entry name" value="Porphobilinogen deaminase, C-terminal domain"/>
    <property type="match status" value="1"/>
</dbReference>
<dbReference type="HAMAP" id="MF_00260">
    <property type="entry name" value="Porphobil_deam"/>
    <property type="match status" value="1"/>
</dbReference>
<dbReference type="InterPro" id="IPR000860">
    <property type="entry name" value="HemC"/>
</dbReference>
<dbReference type="InterPro" id="IPR022419">
    <property type="entry name" value="Porphobilin_deaminase_cofac_BS"/>
</dbReference>
<dbReference type="InterPro" id="IPR022417">
    <property type="entry name" value="Porphobilin_deaminase_N"/>
</dbReference>
<dbReference type="InterPro" id="IPR022418">
    <property type="entry name" value="Porphobilinogen_deaminase_C"/>
</dbReference>
<dbReference type="InterPro" id="IPR036803">
    <property type="entry name" value="Porphobilinogen_deaminase_C_sf"/>
</dbReference>
<dbReference type="NCBIfam" id="TIGR00212">
    <property type="entry name" value="hemC"/>
    <property type="match status" value="1"/>
</dbReference>
<dbReference type="PANTHER" id="PTHR11557">
    <property type="entry name" value="PORPHOBILINOGEN DEAMINASE"/>
    <property type="match status" value="1"/>
</dbReference>
<dbReference type="PANTHER" id="PTHR11557:SF0">
    <property type="entry name" value="PORPHOBILINOGEN DEAMINASE"/>
    <property type="match status" value="1"/>
</dbReference>
<dbReference type="Pfam" id="PF01379">
    <property type="entry name" value="Porphobil_deam"/>
    <property type="match status" value="1"/>
</dbReference>
<dbReference type="Pfam" id="PF03900">
    <property type="entry name" value="Porphobil_deamC"/>
    <property type="match status" value="1"/>
</dbReference>
<dbReference type="PIRSF" id="PIRSF001438">
    <property type="entry name" value="4pyrrol_synth_OHMeBilane_synth"/>
    <property type="match status" value="1"/>
</dbReference>
<dbReference type="PRINTS" id="PR00151">
    <property type="entry name" value="PORPHBDMNASE"/>
</dbReference>
<dbReference type="SUPFAM" id="SSF53850">
    <property type="entry name" value="Periplasmic binding protein-like II"/>
    <property type="match status" value="1"/>
</dbReference>
<dbReference type="SUPFAM" id="SSF54782">
    <property type="entry name" value="Porphobilinogen deaminase (hydroxymethylbilane synthase), C-terminal domain"/>
    <property type="match status" value="1"/>
</dbReference>
<dbReference type="PROSITE" id="PS00533">
    <property type="entry name" value="PORPHOBILINOGEN_DEAM"/>
    <property type="match status" value="1"/>
</dbReference>
<accession>B0RNI9</accession>
<name>HEM3_XANCB</name>
<sequence length="304" mass="32503">MTTLRIATRKSPLALWQSEHVATALRQHHPGLEVVLVPMSTRGDEVLDRSLAAIGGKGLFLKELELAMLRGEADCAVHSLKDVPMELDAPFVLPAILERGDPADALVSNLYATLQALPLGARVGTSSLRRQAQLRAARPDLELIDLRGNVNTRLAKLDNGGYDAIVLACAGLQRLGLEARITARLDAPEWLPAPAQGAVAVECRGDDARIHDLLAVLDAGRTRACVEAERAMNRALHGSCHVPVAAFARWEGEDLFLQGMVGSASDGRLIHAEAHGSPDATEDLGRRVADGLFEKGAAQLLAEL</sequence>
<organism>
    <name type="scientific">Xanthomonas campestris pv. campestris (strain B100)</name>
    <dbReference type="NCBI Taxonomy" id="509169"/>
    <lineage>
        <taxon>Bacteria</taxon>
        <taxon>Pseudomonadati</taxon>
        <taxon>Pseudomonadota</taxon>
        <taxon>Gammaproteobacteria</taxon>
        <taxon>Lysobacterales</taxon>
        <taxon>Lysobacteraceae</taxon>
        <taxon>Xanthomonas</taxon>
    </lineage>
</organism>
<keyword id="KW-0627">Porphyrin biosynthesis</keyword>
<keyword id="KW-0808">Transferase</keyword>
<gene>
    <name evidence="1" type="primary">hemC</name>
    <name type="ordered locus">xcc-b100_0685</name>
</gene>
<comment type="function">
    <text evidence="1">Tetrapolymerization of the monopyrrole PBG into the hydroxymethylbilane pre-uroporphyrinogen in several discrete steps.</text>
</comment>
<comment type="catalytic activity">
    <reaction evidence="1">
        <text>4 porphobilinogen + H2O = hydroxymethylbilane + 4 NH4(+)</text>
        <dbReference type="Rhea" id="RHEA:13185"/>
        <dbReference type="ChEBI" id="CHEBI:15377"/>
        <dbReference type="ChEBI" id="CHEBI:28938"/>
        <dbReference type="ChEBI" id="CHEBI:57845"/>
        <dbReference type="ChEBI" id="CHEBI:58126"/>
        <dbReference type="EC" id="2.5.1.61"/>
    </reaction>
</comment>
<comment type="cofactor">
    <cofactor evidence="1">
        <name>dipyrromethane</name>
        <dbReference type="ChEBI" id="CHEBI:60342"/>
    </cofactor>
    <text evidence="1">Binds 1 dipyrromethane group covalently.</text>
</comment>
<comment type="pathway">
    <text evidence="1">Porphyrin-containing compound metabolism; protoporphyrin-IX biosynthesis; coproporphyrinogen-III from 5-aminolevulinate: step 2/4.</text>
</comment>
<comment type="subunit">
    <text evidence="1">Monomer.</text>
</comment>
<comment type="miscellaneous">
    <text evidence="1">The porphobilinogen subunits are added to the dipyrromethane group.</text>
</comment>
<comment type="similarity">
    <text evidence="1">Belongs to the HMBS family.</text>
</comment>
<protein>
    <recommendedName>
        <fullName evidence="1">Porphobilinogen deaminase</fullName>
        <shortName evidence="1">PBG</shortName>
        <ecNumber evidence="1">2.5.1.61</ecNumber>
    </recommendedName>
    <alternativeName>
        <fullName evidence="1">Hydroxymethylbilane synthase</fullName>
        <shortName evidence="1">HMBS</shortName>
    </alternativeName>
    <alternativeName>
        <fullName evidence="1">Pre-uroporphyrinogen synthase</fullName>
    </alternativeName>
</protein>
<proteinExistence type="inferred from homology"/>
<evidence type="ECO:0000255" key="1">
    <source>
        <dbReference type="HAMAP-Rule" id="MF_00260"/>
    </source>
</evidence>
<reference key="1">
    <citation type="journal article" date="2008" name="J. Biotechnol.">
        <title>The genome of Xanthomonas campestris pv. campestris B100 and its use for the reconstruction of metabolic pathways involved in xanthan biosynthesis.</title>
        <authorList>
            <person name="Vorhoelter F.-J."/>
            <person name="Schneiker S."/>
            <person name="Goesmann A."/>
            <person name="Krause L."/>
            <person name="Bekel T."/>
            <person name="Kaiser O."/>
            <person name="Linke B."/>
            <person name="Patschkowski T."/>
            <person name="Rueckert C."/>
            <person name="Schmid J."/>
            <person name="Sidhu V.K."/>
            <person name="Sieber V."/>
            <person name="Tauch A."/>
            <person name="Watt S.A."/>
            <person name="Weisshaar B."/>
            <person name="Becker A."/>
            <person name="Niehaus K."/>
            <person name="Puehler A."/>
        </authorList>
    </citation>
    <scope>NUCLEOTIDE SEQUENCE [LARGE SCALE GENOMIC DNA]</scope>
    <source>
        <strain>B100</strain>
    </source>
</reference>
<feature type="chain" id="PRO_1000114184" description="Porphobilinogen deaminase">
    <location>
        <begin position="1"/>
        <end position="304"/>
    </location>
</feature>
<feature type="modified residue" description="S-(dipyrrolylmethanemethyl)cysteine" evidence="1">
    <location>
        <position position="240"/>
    </location>
</feature>